<dbReference type="EMBL" id="AF547987">
    <property type="protein sequence ID" value="AAQ12199.1"/>
    <property type="molecule type" value="Genomic_DNA"/>
</dbReference>
<dbReference type="RefSeq" id="NP_958185.1">
    <property type="nucleotide sequence ID" value="NC_005344.1"/>
</dbReference>
<dbReference type="PDB" id="3RWN">
    <property type="method" value="X-ray"/>
    <property type="resolution" value="1.00 A"/>
    <property type="chains" value="A/B/C=132-282"/>
</dbReference>
<dbReference type="PDBsum" id="3RWN"/>
<dbReference type="SMR" id="Q716G6"/>
<dbReference type="KEGG" id="vg:2716655"/>
<dbReference type="OrthoDB" id="10101at10239"/>
<dbReference type="EvolutionaryTrace" id="Q716G6"/>
<dbReference type="Proteomes" id="UP000000846">
    <property type="component" value="Segment"/>
</dbReference>
<dbReference type="Gene3D" id="1.20.5.170">
    <property type="match status" value="1"/>
</dbReference>
<dbReference type="Gene3D" id="2.60.120.1120">
    <property type="entry name" value="Sf6-type phage tail needle knob"/>
    <property type="match status" value="1"/>
</dbReference>
<dbReference type="InterPro" id="IPR032395">
    <property type="entry name" value="Phage_tail_NK"/>
</dbReference>
<dbReference type="InterPro" id="IPR038681">
    <property type="entry name" value="Phage_tail_NK_sf"/>
</dbReference>
<dbReference type="Pfam" id="PF16532">
    <property type="entry name" value="Phage_tail_NK"/>
    <property type="match status" value="1"/>
</dbReference>
<dbReference type="SUPFAM" id="SSF57997">
    <property type="entry name" value="Tropomyosin"/>
    <property type="match status" value="1"/>
</dbReference>
<evidence type="ECO:0000250" key="1">
    <source>
        <dbReference type="UniProtKB" id="P35837"/>
    </source>
</evidence>
<evidence type="ECO:0000269" key="2">
    <source>
    </source>
</evidence>
<evidence type="ECO:0000269" key="3">
    <source>
    </source>
</evidence>
<evidence type="ECO:0000305" key="4"/>
<evidence type="ECO:0007744" key="5">
    <source>
        <dbReference type="PDB" id="3RWN"/>
    </source>
</evidence>
<sequence length="282" mass="30598">MADSNLNVPVIIQATRLDTSVLPRNIFSQSYLLYVIAQGTDVGNVANKANEAGQGAYDAQVRNDEQDVILADHEQRISAAEATLVNHEERIRQAESTLQDHETRIAQNESDISSLDTRVQSLESQVSDHETRIDALEYATTRKKSEVVYSGVSVTIPTAPTNLVSLLKTLTPSSGTLAPFFDTVNNKMVVFNENKTLFFKLSIVGTWPSGTANRSMQLTFSGSVPDTLVSSRNSATTTDNILLATFFSVDKDGFLATNGSTLTIQSNGASFTATTIKIIAEQ</sequence>
<organism>
    <name type="scientific">Shigella phage Sf6</name>
    <name type="common">Shigella flexneri bacteriophage VI</name>
    <name type="synonym">Bacteriophage SfVI</name>
    <dbReference type="NCBI Taxonomy" id="10761"/>
    <lineage>
        <taxon>Viruses</taxon>
        <taxon>Duplodnaviria</taxon>
        <taxon>Heunggongvirae</taxon>
        <taxon>Uroviricota</taxon>
        <taxon>Caudoviricetes</taxon>
        <taxon>Lederbergvirus</taxon>
    </lineage>
</organism>
<gene>
    <name type="primary">9</name>
</gene>
<accession>Q716G6</accession>
<name>NEEDL_BPSFV</name>
<feature type="chain" id="PRO_0000462372" description="Tail needle protein" evidence="1">
    <location>
        <begin position="1"/>
        <end position="282"/>
    </location>
</feature>
<feature type="repeat" description="Trimerization heptad repeat 1" evidence="1">
    <location>
        <begin position="61"/>
        <end position="67"/>
    </location>
</feature>
<feature type="repeat" description="Trimerization heptad repeat 2" evidence="1">
    <location>
        <begin position="70"/>
        <end position="76"/>
    </location>
</feature>
<feature type="repeat" description="Trimerization heptad repeat 3" evidence="1">
    <location>
        <begin position="77"/>
        <end position="83"/>
    </location>
</feature>
<feature type="repeat" description="Trimerization heptad repeat 4" evidence="1">
    <location>
        <begin position="84"/>
        <end position="90"/>
    </location>
</feature>
<feature type="repeat" description="Trimerization heptad repeat 5" evidence="1">
    <location>
        <begin position="91"/>
        <end position="97"/>
    </location>
</feature>
<feature type="repeat" description="Trimerization heptad repeat 6" evidence="1">
    <location>
        <begin position="98"/>
        <end position="104"/>
    </location>
</feature>
<feature type="repeat" description="Trimerization heptad repeat 7" evidence="1">
    <location>
        <begin position="105"/>
        <end position="111"/>
    </location>
</feature>
<feature type="repeat" description="Trimerization heptad repeat 8" evidence="1">
    <location>
        <begin position="112"/>
        <end position="118"/>
    </location>
</feature>
<feature type="repeat" description="Trimerization heptad repeat 9" evidence="1">
    <location>
        <begin position="119"/>
        <end position="125"/>
    </location>
</feature>
<feature type="repeat" description="Trimerization heptad repeat 10" evidence="1">
    <location>
        <begin position="126"/>
        <end position="132"/>
    </location>
</feature>
<feature type="repeat" description="Trimerization heptad repeat 11" evidence="1">
    <location>
        <begin position="133"/>
        <end position="139"/>
    </location>
</feature>
<feature type="region of interest" description="Interaction with tail hub protein" evidence="1">
    <location>
        <begin position="2"/>
        <end position="60"/>
    </location>
</feature>
<feature type="region of interest" description="C-terminal globular knob" evidence="2 3">
    <location>
        <begin position="132"/>
        <end position="282"/>
    </location>
</feature>
<feature type="coiled-coil region" evidence="3">
    <location>
        <begin position="61"/>
        <end position="139"/>
    </location>
</feature>
<feature type="binding site" evidence="5">
    <location>
        <position position="146"/>
    </location>
    <ligand>
        <name>L-glutamate</name>
        <dbReference type="ChEBI" id="CHEBI:29985"/>
    </ligand>
</feature>
<feature type="binding site" evidence="5">
    <location>
        <position position="200"/>
    </location>
    <ligand>
        <name>L-glutamate</name>
        <dbReference type="ChEBI" id="CHEBI:29985"/>
    </ligand>
</feature>
<feature type="binding site" evidence="5">
    <location>
        <position position="248"/>
    </location>
    <ligand>
        <name>L-glutamate</name>
        <dbReference type="ChEBI" id="CHEBI:29985"/>
    </ligand>
</feature>
<feature type="binding site" evidence="5">
    <location>
        <position position="250"/>
    </location>
    <ligand>
        <name>L-glutamate</name>
        <dbReference type="ChEBI" id="CHEBI:29985"/>
    </ligand>
</feature>
<feature type="binding site" evidence="5">
    <location>
        <position position="255"/>
    </location>
    <ligand>
        <name>L-glutamate</name>
        <dbReference type="ChEBI" id="CHEBI:29985"/>
    </ligand>
</feature>
<feature type="binding site" evidence="5">
    <location>
        <position position="277"/>
    </location>
    <ligand>
        <name>L-glutamate</name>
        <dbReference type="ChEBI" id="CHEBI:29985"/>
    </ligand>
</feature>
<keyword id="KW-0002">3D-structure</keyword>
<keyword id="KW-0175">Coiled coil</keyword>
<keyword id="KW-0426">Late protein</keyword>
<keyword id="KW-1172">Pore-mediated penetration of viral genome into host cell</keyword>
<keyword id="KW-1185">Reference proteome</keyword>
<keyword id="KW-0677">Repeat</keyword>
<keyword id="KW-1171">Viral genome ejection through host cell envelope</keyword>
<keyword id="KW-1162">Viral penetration into host cytoplasm</keyword>
<keyword id="KW-1244">Viral short tail ejection system</keyword>
<keyword id="KW-1227">Viral tail protein</keyword>
<keyword id="KW-0946">Virion</keyword>
<keyword id="KW-1160">Virus entry into host cell</keyword>
<proteinExistence type="evidence at protein level"/>
<comment type="function">
    <text evidence="1">Cell-perforating component and plug protein of the phage tail machine. Together with the internal ejection proteins is required for stabilization of the condensed DNA within the capsid by plugging the hole through which the DNA enters. Host cell membrane perforation allows viral DNA ejection. The needle penetrates the host outer membrane. The needle is released and the internal head protein gp7 is ejected to form an extra-cellular channel.</text>
</comment>
<comment type="subunit">
    <text evidence="1 2">Homotrimer. The trimer forms an elongated coiled-coil (280A x 25A) (PubMed:19482036). he N-terminal tip may exist in a pre-ejection extended conformation, which may fold into a trimer of hairpins only after ejection into the host (By similarity). Interacts with the tail hub (By similarity). Interacts with the head-to-tail adapter protein (By similarity).</text>
</comment>
<comment type="subcellular location">
    <subcellularLocation>
        <location evidence="1">Virion</location>
    </subcellularLocation>
</comment>
<comment type="domain">
    <text evidence="2 3">the N-terminus forms the domain that binds to the tail hub protein and plugs the portal vertex channel, the middle coiled-coil rod, and a C-terminal globular knob.</text>
</comment>
<comment type="miscellaneous">
    <text evidence="3">The tail needle knob is bound to L-Glu, which might play a role in the assembly of the phage tail needle knob in vivo.</text>
</comment>
<comment type="similarity">
    <text evidence="4">Belongs to the Lederbergvirus tail needle protein family.</text>
</comment>
<protein>
    <recommendedName>
        <fullName>Tail needle protein</fullName>
    </recommendedName>
    <alternativeName>
        <fullName>Head completion protein</fullName>
    </alternativeName>
    <alternativeName>
        <fullName>Packaged DNA stabilization protein</fullName>
    </alternativeName>
    <alternativeName>
        <fullName>Tail accessory factor gp9</fullName>
    </alternativeName>
</protein>
<reference key="1">
    <citation type="journal article" date="1991" name="Gene">
        <title>The oac gene encoding a lipopolysaccharide O-antigen acetylase maps adjacent to the integrase-encoding gene on the genome of Shigella flexneri bacteriophage Sf6.</title>
        <authorList>
            <person name="Clark C.A."/>
            <person name="Beltrame J."/>
            <person name="Manning P.A."/>
        </authorList>
    </citation>
    <scope>NUCLEOTIDE SEQUENCE [GENOMIC DNA]</scope>
</reference>
<reference key="2">
    <citation type="journal article" date="1999" name="Microbiology">
        <title>The Shigella flexneri bacteriophage Sf6 tailspike protein (TSP)/endorhamnosidase is related to the bacteriophage P22 TSP and has a motif common to exo- and endoglycanases, and C-5 epimerases.</title>
        <authorList>
            <person name="Chua J.E.H."/>
            <person name="Manning P.A."/>
            <person name="Morona R."/>
        </authorList>
    </citation>
    <scope>NUCLEOTIDE SEQUENCE [GENOMIC DNA]</scope>
</reference>
<reference key="3">
    <citation type="journal article" date="2004" name="J. Mol. Biol.">
        <title>The chromosome of Shigella flexneri bacteriophage Sf6: complete nucleotide sequence, genetic mosaicism, and DNA packaging.</title>
        <authorList>
            <person name="Casjens S."/>
            <person name="Winn-Stapley D.A."/>
            <person name="Gilcrease E.B."/>
            <person name="Morona R."/>
            <person name="Kuehlewein C."/>
            <person name="Chua J.E.H."/>
            <person name="Manning P.A."/>
            <person name="Inwood W."/>
            <person name="Clark A.J."/>
        </authorList>
    </citation>
    <scope>NUCLEOTIDE SEQUENCE [GENOMIC DNA]</scope>
</reference>
<reference key="4">
    <citation type="journal article" date="2009" name="J. Mol. Biol.">
        <title>An evolutionarily conserved family of virion tail needles related to bacteriophage P22 gp26: correlation between structural stability and length of the alpha-helical trimeric coiled coil.</title>
        <authorList>
            <person name="Bhardwaj A."/>
            <person name="Walker-Kopp N."/>
            <person name="Casjens S.R."/>
            <person name="Cingolani G."/>
        </authorList>
    </citation>
    <scope>DOMAIN</scope>
    <scope>SUBUNIT</scope>
</reference>
<reference evidence="5" key="5">
    <citation type="journal article" date="2011" name="J. Biol. Chem.">
        <title>Atomic structure of bacteriophage Sf6 tail needle knob.</title>
        <authorList>
            <person name="Bhardwaj A."/>
            <person name="Molineux I.J."/>
            <person name="Casjens S.R."/>
            <person name="Cingolani G."/>
        </authorList>
    </citation>
    <scope>X-RAY CRYSTALLOGRAPHY (1.00 ANGSTROMS) OF 132-282 IN COMPLEX WITH L-GLUTAMATE</scope>
    <scope>DOMAIN</scope>
</reference>
<organismHost>
    <name type="scientific">Shigella flexneri</name>
    <dbReference type="NCBI Taxonomy" id="623"/>
</organismHost>